<sequence length="344" mass="37573">MTIEEALLGLLDGQTLISSEMESIMSEIMDGQISPIKIAAFLVLLRQRGEEVEEIYGAARAILNHAEQPILEGDPIDTCGTGGDGANTFNISTAASLIAHACGVKVAKHGNRSISSRCGSADVLEAMGFKIDLPKKETEELFKETGFVFLFAPIFHKAMKNVAPVRKELGLRTIFNMLGPLINPARTQRQIIGVYSKDLTGMFAQVLRQFDAKHCLILHGQTDEGGILDEPSVCGPTYISELQHGTVRTYTVHPEDFGLRRHSISQLKGGDARENAQIIWQILDKNGPEAREDAVVFTAGMACYVAELTPSIKEGIDKARQAIHSGAAKQSVERLLEKHRNLVI</sequence>
<proteinExistence type="inferred from homology"/>
<comment type="function">
    <text evidence="1">Catalyzes the transfer of the phosphoribosyl group of 5-phosphorylribose-1-pyrophosphate (PRPP) to anthranilate to yield N-(5'-phosphoribosyl)-anthranilate (PRA).</text>
</comment>
<comment type="catalytic activity">
    <reaction evidence="1">
        <text>N-(5-phospho-beta-D-ribosyl)anthranilate + diphosphate = 5-phospho-alpha-D-ribose 1-diphosphate + anthranilate</text>
        <dbReference type="Rhea" id="RHEA:11768"/>
        <dbReference type="ChEBI" id="CHEBI:16567"/>
        <dbReference type="ChEBI" id="CHEBI:18277"/>
        <dbReference type="ChEBI" id="CHEBI:33019"/>
        <dbReference type="ChEBI" id="CHEBI:58017"/>
        <dbReference type="EC" id="2.4.2.18"/>
    </reaction>
</comment>
<comment type="cofactor">
    <cofactor evidence="1">
        <name>Mg(2+)</name>
        <dbReference type="ChEBI" id="CHEBI:18420"/>
    </cofactor>
    <text evidence="1">Binds 2 magnesium ions per monomer.</text>
</comment>
<comment type="pathway">
    <text evidence="1">Amino-acid biosynthesis; L-tryptophan biosynthesis; L-tryptophan from chorismate: step 2/5.</text>
</comment>
<comment type="subunit">
    <text evidence="1">Homodimer.</text>
</comment>
<comment type="similarity">
    <text evidence="1">Belongs to the anthranilate phosphoribosyltransferase family.</text>
</comment>
<accession>B3QUY6</accession>
<keyword id="KW-0028">Amino-acid biosynthesis</keyword>
<keyword id="KW-0057">Aromatic amino acid biosynthesis</keyword>
<keyword id="KW-0328">Glycosyltransferase</keyword>
<keyword id="KW-0460">Magnesium</keyword>
<keyword id="KW-0479">Metal-binding</keyword>
<keyword id="KW-1185">Reference proteome</keyword>
<keyword id="KW-0808">Transferase</keyword>
<keyword id="KW-0822">Tryptophan biosynthesis</keyword>
<organism>
    <name type="scientific">Chloroherpeton thalassium (strain ATCC 35110 / GB-78)</name>
    <dbReference type="NCBI Taxonomy" id="517418"/>
    <lineage>
        <taxon>Bacteria</taxon>
        <taxon>Pseudomonadati</taxon>
        <taxon>Chlorobiota</taxon>
        <taxon>Chlorobiia</taxon>
        <taxon>Chlorobiales</taxon>
        <taxon>Chloroherpetonaceae</taxon>
        <taxon>Chloroherpeton</taxon>
    </lineage>
</organism>
<dbReference type="EC" id="2.4.2.18" evidence="1"/>
<dbReference type="EMBL" id="CP001100">
    <property type="protein sequence ID" value="ACF14487.1"/>
    <property type="molecule type" value="Genomic_DNA"/>
</dbReference>
<dbReference type="RefSeq" id="WP_012500570.1">
    <property type="nucleotide sequence ID" value="NC_011026.1"/>
</dbReference>
<dbReference type="SMR" id="B3QUY6"/>
<dbReference type="STRING" id="517418.Ctha_2035"/>
<dbReference type="KEGG" id="cts:Ctha_2035"/>
<dbReference type="eggNOG" id="COG0547">
    <property type="taxonomic scope" value="Bacteria"/>
</dbReference>
<dbReference type="HOGENOM" id="CLU_034315_2_1_10"/>
<dbReference type="OrthoDB" id="9806430at2"/>
<dbReference type="UniPathway" id="UPA00035">
    <property type="reaction ID" value="UER00041"/>
</dbReference>
<dbReference type="Proteomes" id="UP000001208">
    <property type="component" value="Chromosome"/>
</dbReference>
<dbReference type="GO" id="GO:0005829">
    <property type="term" value="C:cytosol"/>
    <property type="evidence" value="ECO:0007669"/>
    <property type="project" value="TreeGrafter"/>
</dbReference>
<dbReference type="GO" id="GO:0004048">
    <property type="term" value="F:anthranilate phosphoribosyltransferase activity"/>
    <property type="evidence" value="ECO:0007669"/>
    <property type="project" value="UniProtKB-UniRule"/>
</dbReference>
<dbReference type="GO" id="GO:0000287">
    <property type="term" value="F:magnesium ion binding"/>
    <property type="evidence" value="ECO:0007669"/>
    <property type="project" value="UniProtKB-UniRule"/>
</dbReference>
<dbReference type="GO" id="GO:0000162">
    <property type="term" value="P:L-tryptophan biosynthetic process"/>
    <property type="evidence" value="ECO:0007669"/>
    <property type="project" value="UniProtKB-UniRule"/>
</dbReference>
<dbReference type="FunFam" id="3.40.1030.10:FF:000002">
    <property type="entry name" value="Anthranilate phosphoribosyltransferase"/>
    <property type="match status" value="1"/>
</dbReference>
<dbReference type="Gene3D" id="3.40.1030.10">
    <property type="entry name" value="Nucleoside phosphorylase/phosphoribosyltransferase catalytic domain"/>
    <property type="match status" value="1"/>
</dbReference>
<dbReference type="Gene3D" id="1.20.970.10">
    <property type="entry name" value="Transferase, Pyrimidine Nucleoside Phosphorylase, Chain C"/>
    <property type="match status" value="1"/>
</dbReference>
<dbReference type="HAMAP" id="MF_00211">
    <property type="entry name" value="TrpD"/>
    <property type="match status" value="1"/>
</dbReference>
<dbReference type="InterPro" id="IPR005940">
    <property type="entry name" value="Anthranilate_Pribosyl_Tfrase"/>
</dbReference>
<dbReference type="InterPro" id="IPR000312">
    <property type="entry name" value="Glycosyl_Trfase_fam3"/>
</dbReference>
<dbReference type="InterPro" id="IPR017459">
    <property type="entry name" value="Glycosyl_Trfase_fam3_N_dom"/>
</dbReference>
<dbReference type="InterPro" id="IPR036320">
    <property type="entry name" value="Glycosyl_Trfase_fam3_N_dom_sf"/>
</dbReference>
<dbReference type="InterPro" id="IPR035902">
    <property type="entry name" value="Nuc_phospho_transferase"/>
</dbReference>
<dbReference type="NCBIfam" id="TIGR01245">
    <property type="entry name" value="trpD"/>
    <property type="match status" value="1"/>
</dbReference>
<dbReference type="PANTHER" id="PTHR43285">
    <property type="entry name" value="ANTHRANILATE PHOSPHORIBOSYLTRANSFERASE"/>
    <property type="match status" value="1"/>
</dbReference>
<dbReference type="PANTHER" id="PTHR43285:SF2">
    <property type="entry name" value="ANTHRANILATE PHOSPHORIBOSYLTRANSFERASE"/>
    <property type="match status" value="1"/>
</dbReference>
<dbReference type="Pfam" id="PF02885">
    <property type="entry name" value="Glycos_trans_3N"/>
    <property type="match status" value="1"/>
</dbReference>
<dbReference type="Pfam" id="PF00591">
    <property type="entry name" value="Glycos_transf_3"/>
    <property type="match status" value="1"/>
</dbReference>
<dbReference type="SUPFAM" id="SSF52418">
    <property type="entry name" value="Nucleoside phosphorylase/phosphoribosyltransferase catalytic domain"/>
    <property type="match status" value="1"/>
</dbReference>
<dbReference type="SUPFAM" id="SSF47648">
    <property type="entry name" value="Nucleoside phosphorylase/phosphoribosyltransferase N-terminal domain"/>
    <property type="match status" value="1"/>
</dbReference>
<gene>
    <name evidence="1" type="primary">trpD</name>
    <name type="ordered locus">Ctha_2035</name>
</gene>
<feature type="chain" id="PRO_1000099795" description="Anthranilate phosphoribosyltransferase">
    <location>
        <begin position="1"/>
        <end position="344"/>
    </location>
</feature>
<feature type="binding site" evidence="1">
    <location>
        <position position="80"/>
    </location>
    <ligand>
        <name>5-phospho-alpha-D-ribose 1-diphosphate</name>
        <dbReference type="ChEBI" id="CHEBI:58017"/>
    </ligand>
</feature>
<feature type="binding site" evidence="1">
    <location>
        <position position="80"/>
    </location>
    <ligand>
        <name>anthranilate</name>
        <dbReference type="ChEBI" id="CHEBI:16567"/>
        <label>1</label>
    </ligand>
</feature>
<feature type="binding site" evidence="1">
    <location>
        <begin position="83"/>
        <end position="84"/>
    </location>
    <ligand>
        <name>5-phospho-alpha-D-ribose 1-diphosphate</name>
        <dbReference type="ChEBI" id="CHEBI:58017"/>
    </ligand>
</feature>
<feature type="binding site" evidence="1">
    <location>
        <position position="88"/>
    </location>
    <ligand>
        <name>5-phospho-alpha-D-ribose 1-diphosphate</name>
        <dbReference type="ChEBI" id="CHEBI:58017"/>
    </ligand>
</feature>
<feature type="binding site" evidence="1">
    <location>
        <begin position="90"/>
        <end position="93"/>
    </location>
    <ligand>
        <name>5-phospho-alpha-D-ribose 1-diphosphate</name>
        <dbReference type="ChEBI" id="CHEBI:58017"/>
    </ligand>
</feature>
<feature type="binding site" evidence="1">
    <location>
        <position position="92"/>
    </location>
    <ligand>
        <name>Mg(2+)</name>
        <dbReference type="ChEBI" id="CHEBI:18420"/>
        <label>1</label>
    </ligand>
</feature>
<feature type="binding site" evidence="1">
    <location>
        <begin position="108"/>
        <end position="116"/>
    </location>
    <ligand>
        <name>5-phospho-alpha-D-ribose 1-diphosphate</name>
        <dbReference type="ChEBI" id="CHEBI:58017"/>
    </ligand>
</feature>
<feature type="binding site" evidence="1">
    <location>
        <position position="111"/>
    </location>
    <ligand>
        <name>anthranilate</name>
        <dbReference type="ChEBI" id="CHEBI:16567"/>
        <label>1</label>
    </ligand>
</feature>
<feature type="binding site" evidence="1">
    <location>
        <position position="120"/>
    </location>
    <ligand>
        <name>5-phospho-alpha-D-ribose 1-diphosphate</name>
        <dbReference type="ChEBI" id="CHEBI:58017"/>
    </ligand>
</feature>
<feature type="binding site" evidence="1">
    <location>
        <position position="166"/>
    </location>
    <ligand>
        <name>anthranilate</name>
        <dbReference type="ChEBI" id="CHEBI:16567"/>
        <label>2</label>
    </ligand>
</feature>
<feature type="binding site" evidence="1">
    <location>
        <position position="229"/>
    </location>
    <ligand>
        <name>Mg(2+)</name>
        <dbReference type="ChEBI" id="CHEBI:18420"/>
        <label>2</label>
    </ligand>
</feature>
<feature type="binding site" evidence="1">
    <location>
        <position position="230"/>
    </location>
    <ligand>
        <name>Mg(2+)</name>
        <dbReference type="ChEBI" id="CHEBI:18420"/>
        <label>1</label>
    </ligand>
</feature>
<feature type="binding site" evidence="1">
    <location>
        <position position="230"/>
    </location>
    <ligand>
        <name>Mg(2+)</name>
        <dbReference type="ChEBI" id="CHEBI:18420"/>
        <label>2</label>
    </ligand>
</feature>
<name>TRPD_CHLT3</name>
<evidence type="ECO:0000255" key="1">
    <source>
        <dbReference type="HAMAP-Rule" id="MF_00211"/>
    </source>
</evidence>
<protein>
    <recommendedName>
        <fullName evidence="1">Anthranilate phosphoribosyltransferase</fullName>
        <ecNumber evidence="1">2.4.2.18</ecNumber>
    </recommendedName>
</protein>
<reference key="1">
    <citation type="submission" date="2008-06" db="EMBL/GenBank/DDBJ databases">
        <title>Complete sequence of Chloroherpeton thalassium ATCC 35110.</title>
        <authorList>
            <consortium name="US DOE Joint Genome Institute"/>
            <person name="Lucas S."/>
            <person name="Copeland A."/>
            <person name="Lapidus A."/>
            <person name="Glavina del Rio T."/>
            <person name="Dalin E."/>
            <person name="Tice H."/>
            <person name="Bruce D."/>
            <person name="Goodwin L."/>
            <person name="Pitluck S."/>
            <person name="Schmutz J."/>
            <person name="Larimer F."/>
            <person name="Land M."/>
            <person name="Hauser L."/>
            <person name="Kyrpides N."/>
            <person name="Mikhailova N."/>
            <person name="Liu Z."/>
            <person name="Li T."/>
            <person name="Zhao F."/>
            <person name="Overmann J."/>
            <person name="Bryant D.A."/>
            <person name="Richardson P."/>
        </authorList>
    </citation>
    <scope>NUCLEOTIDE SEQUENCE [LARGE SCALE GENOMIC DNA]</scope>
    <source>
        <strain>ATCC 35110 / GB-78</strain>
    </source>
</reference>